<sequence length="364" mass="37664">MTLTIAELARALDARLWGDGSLIVNGAAEAGQAGEGQIALATSPAYAEKLSPGGMALLAEGADPEALGLRAAILVGRPRLAMAGLTRAFDPGPGIAPGIHPSAVIDPTAELPEDAAIGPFVVIGPRVRIGAGARIASHVSIGADTVIGRDALIHAGVRIAHGVTIGDRVILNPGVSLGADGFSFVTPEKSGVEEIRQSLGERQEIRQQHWTRIHSLGGLEIDDDVEIGANSTVDRGTIRATRIGRGTKIDNLVQVGHNCVVGEDCLLCGLVGVAGSARIGNRVVLGGQVGVSDNIFVGDDVIAGGATKIFTNAPAGRVLLGSPAVRMETHVEAQKNIRRLPRLYAQVAELRETVKKLLDKGDVE</sequence>
<gene>
    <name evidence="1" type="primary">lpxD</name>
    <name type="ordered locus">Pden_1241</name>
</gene>
<proteinExistence type="inferred from homology"/>
<evidence type="ECO:0000255" key="1">
    <source>
        <dbReference type="HAMAP-Rule" id="MF_00523"/>
    </source>
</evidence>
<feature type="chain" id="PRO_1000050947" description="UDP-3-O-acylglucosamine N-acyltransferase">
    <location>
        <begin position="1"/>
        <end position="364"/>
    </location>
</feature>
<feature type="active site" description="Proton acceptor" evidence="1">
    <location>
        <position position="257"/>
    </location>
</feature>
<comment type="function">
    <text evidence="1">Catalyzes the N-acylation of UDP-3-O-acylglucosamine using 3-hydroxyacyl-ACP as the acyl donor. Is involved in the biosynthesis of lipid A, a phosphorylated glycolipid that anchors the lipopolysaccharide to the outer membrane of the cell.</text>
</comment>
<comment type="catalytic activity">
    <reaction evidence="1">
        <text>a UDP-3-O-[(3R)-3-hydroxyacyl]-alpha-D-glucosamine + a (3R)-hydroxyacyl-[ACP] = a UDP-2-N,3-O-bis[(3R)-3-hydroxyacyl]-alpha-D-glucosamine + holo-[ACP] + H(+)</text>
        <dbReference type="Rhea" id="RHEA:53836"/>
        <dbReference type="Rhea" id="RHEA-COMP:9685"/>
        <dbReference type="Rhea" id="RHEA-COMP:9945"/>
        <dbReference type="ChEBI" id="CHEBI:15378"/>
        <dbReference type="ChEBI" id="CHEBI:64479"/>
        <dbReference type="ChEBI" id="CHEBI:78827"/>
        <dbReference type="ChEBI" id="CHEBI:137740"/>
        <dbReference type="ChEBI" id="CHEBI:137748"/>
        <dbReference type="EC" id="2.3.1.191"/>
    </reaction>
</comment>
<comment type="pathway">
    <text evidence="1">Bacterial outer membrane biogenesis; LPS lipid A biosynthesis.</text>
</comment>
<comment type="subunit">
    <text evidence="1">Homotrimer.</text>
</comment>
<comment type="similarity">
    <text evidence="1">Belongs to the transferase hexapeptide repeat family. LpxD subfamily.</text>
</comment>
<keyword id="KW-0012">Acyltransferase</keyword>
<keyword id="KW-0441">Lipid A biosynthesis</keyword>
<keyword id="KW-0444">Lipid biosynthesis</keyword>
<keyword id="KW-0443">Lipid metabolism</keyword>
<keyword id="KW-1185">Reference proteome</keyword>
<keyword id="KW-0677">Repeat</keyword>
<keyword id="KW-0808">Transferase</keyword>
<protein>
    <recommendedName>
        <fullName evidence="1">UDP-3-O-acylglucosamine N-acyltransferase</fullName>
        <ecNumber evidence="1">2.3.1.191</ecNumber>
    </recommendedName>
</protein>
<organism>
    <name type="scientific">Paracoccus denitrificans (strain Pd 1222)</name>
    <dbReference type="NCBI Taxonomy" id="318586"/>
    <lineage>
        <taxon>Bacteria</taxon>
        <taxon>Pseudomonadati</taxon>
        <taxon>Pseudomonadota</taxon>
        <taxon>Alphaproteobacteria</taxon>
        <taxon>Rhodobacterales</taxon>
        <taxon>Paracoccaceae</taxon>
        <taxon>Paracoccus</taxon>
    </lineage>
</organism>
<accession>A1B1F2</accession>
<reference key="1">
    <citation type="submission" date="2006-12" db="EMBL/GenBank/DDBJ databases">
        <title>Complete sequence of chromosome 1 of Paracoccus denitrificans PD1222.</title>
        <authorList>
            <person name="Copeland A."/>
            <person name="Lucas S."/>
            <person name="Lapidus A."/>
            <person name="Barry K."/>
            <person name="Detter J.C."/>
            <person name="Glavina del Rio T."/>
            <person name="Hammon N."/>
            <person name="Israni S."/>
            <person name="Dalin E."/>
            <person name="Tice H."/>
            <person name="Pitluck S."/>
            <person name="Munk A.C."/>
            <person name="Brettin T."/>
            <person name="Bruce D."/>
            <person name="Han C."/>
            <person name="Tapia R."/>
            <person name="Gilna P."/>
            <person name="Schmutz J."/>
            <person name="Larimer F."/>
            <person name="Land M."/>
            <person name="Hauser L."/>
            <person name="Kyrpides N."/>
            <person name="Lykidis A."/>
            <person name="Spiro S."/>
            <person name="Richardson D.J."/>
            <person name="Moir J.W.B."/>
            <person name="Ferguson S.J."/>
            <person name="van Spanning R.J.M."/>
            <person name="Richardson P."/>
        </authorList>
    </citation>
    <scope>NUCLEOTIDE SEQUENCE [LARGE SCALE GENOMIC DNA]</scope>
    <source>
        <strain>Pd 1222</strain>
    </source>
</reference>
<name>LPXD_PARDP</name>
<dbReference type="EC" id="2.3.1.191" evidence="1"/>
<dbReference type="EMBL" id="CP000489">
    <property type="protein sequence ID" value="ABL69346.1"/>
    <property type="molecule type" value="Genomic_DNA"/>
</dbReference>
<dbReference type="RefSeq" id="WP_011747564.1">
    <property type="nucleotide sequence ID" value="NC_008686.1"/>
</dbReference>
<dbReference type="SMR" id="A1B1F2"/>
<dbReference type="STRING" id="318586.Pden_1241"/>
<dbReference type="EnsemblBacteria" id="ABL69346">
    <property type="protein sequence ID" value="ABL69346"/>
    <property type="gene ID" value="Pden_1241"/>
</dbReference>
<dbReference type="GeneID" id="93452454"/>
<dbReference type="KEGG" id="pde:Pden_1241"/>
<dbReference type="eggNOG" id="COG1044">
    <property type="taxonomic scope" value="Bacteria"/>
</dbReference>
<dbReference type="HOGENOM" id="CLU_049865_0_0_5"/>
<dbReference type="OrthoDB" id="9784739at2"/>
<dbReference type="UniPathway" id="UPA00973"/>
<dbReference type="Proteomes" id="UP000000361">
    <property type="component" value="Chromosome 1"/>
</dbReference>
<dbReference type="GO" id="GO:0016020">
    <property type="term" value="C:membrane"/>
    <property type="evidence" value="ECO:0007669"/>
    <property type="project" value="GOC"/>
</dbReference>
<dbReference type="GO" id="GO:0016410">
    <property type="term" value="F:N-acyltransferase activity"/>
    <property type="evidence" value="ECO:0007669"/>
    <property type="project" value="InterPro"/>
</dbReference>
<dbReference type="GO" id="GO:0009245">
    <property type="term" value="P:lipid A biosynthetic process"/>
    <property type="evidence" value="ECO:0007669"/>
    <property type="project" value="UniProtKB-UniRule"/>
</dbReference>
<dbReference type="CDD" id="cd03352">
    <property type="entry name" value="LbH_LpxD"/>
    <property type="match status" value="1"/>
</dbReference>
<dbReference type="Gene3D" id="2.160.10.10">
    <property type="entry name" value="Hexapeptide repeat proteins"/>
    <property type="match status" value="1"/>
</dbReference>
<dbReference type="Gene3D" id="3.40.1390.10">
    <property type="entry name" value="MurE/MurF, N-terminal domain"/>
    <property type="match status" value="1"/>
</dbReference>
<dbReference type="HAMAP" id="MF_00523">
    <property type="entry name" value="LpxD"/>
    <property type="match status" value="1"/>
</dbReference>
<dbReference type="InterPro" id="IPR001451">
    <property type="entry name" value="Hexapep"/>
</dbReference>
<dbReference type="InterPro" id="IPR018357">
    <property type="entry name" value="Hexapep_transf_CS"/>
</dbReference>
<dbReference type="InterPro" id="IPR007691">
    <property type="entry name" value="LpxD"/>
</dbReference>
<dbReference type="InterPro" id="IPR011004">
    <property type="entry name" value="Trimer_LpxA-like_sf"/>
</dbReference>
<dbReference type="NCBIfam" id="NF002060">
    <property type="entry name" value="PRK00892.1"/>
    <property type="match status" value="1"/>
</dbReference>
<dbReference type="PANTHER" id="PTHR43378">
    <property type="entry name" value="UDP-3-O-ACYLGLUCOSAMINE N-ACYLTRANSFERASE"/>
    <property type="match status" value="1"/>
</dbReference>
<dbReference type="PANTHER" id="PTHR43378:SF2">
    <property type="entry name" value="UDP-3-O-ACYLGLUCOSAMINE N-ACYLTRANSFERASE 1, MITOCHONDRIAL-RELATED"/>
    <property type="match status" value="1"/>
</dbReference>
<dbReference type="Pfam" id="PF00132">
    <property type="entry name" value="Hexapep"/>
    <property type="match status" value="2"/>
</dbReference>
<dbReference type="SUPFAM" id="SSF51161">
    <property type="entry name" value="Trimeric LpxA-like enzymes"/>
    <property type="match status" value="1"/>
</dbReference>
<dbReference type="PROSITE" id="PS00101">
    <property type="entry name" value="HEXAPEP_TRANSFERASES"/>
    <property type="match status" value="2"/>
</dbReference>